<dbReference type="EC" id="3.5.1.5"/>
<dbReference type="EMBL" id="AJ578495">
    <property type="protein sequence ID" value="CAE17672.1"/>
    <property type="molecule type" value="mRNA"/>
</dbReference>
<dbReference type="EMBL" id="AAHF01000007">
    <property type="protein sequence ID" value="EAL88166.1"/>
    <property type="status" value="ALT_SEQ"/>
    <property type="molecule type" value="Genomic_DNA"/>
</dbReference>
<dbReference type="RefSeq" id="XP_750204.1">
    <property type="nucleotide sequence ID" value="XM_745111.1"/>
</dbReference>
<dbReference type="SMR" id="Q6A3P9"/>
<dbReference type="STRING" id="330879.Q6A3P9"/>
<dbReference type="MEROPS" id="M38.982"/>
<dbReference type="GeneID" id="3507289"/>
<dbReference type="KEGG" id="afm:AFUA_1G04560"/>
<dbReference type="eggNOG" id="ENOG502QPKB">
    <property type="taxonomic scope" value="Eukaryota"/>
</dbReference>
<dbReference type="HOGENOM" id="CLU_000980_0_0_1"/>
<dbReference type="InParanoid" id="Q6A3P9"/>
<dbReference type="OrthoDB" id="1708534at2759"/>
<dbReference type="UniPathway" id="UPA00258">
    <property type="reaction ID" value="UER00370"/>
</dbReference>
<dbReference type="Proteomes" id="UP000002530">
    <property type="component" value="Chromosome 1"/>
</dbReference>
<dbReference type="GO" id="GO:0035550">
    <property type="term" value="C:urease complex"/>
    <property type="evidence" value="ECO:0007669"/>
    <property type="project" value="InterPro"/>
</dbReference>
<dbReference type="GO" id="GO:0016151">
    <property type="term" value="F:nickel cation binding"/>
    <property type="evidence" value="ECO:0007669"/>
    <property type="project" value="InterPro"/>
</dbReference>
<dbReference type="GO" id="GO:0009039">
    <property type="term" value="F:urease activity"/>
    <property type="evidence" value="ECO:0000318"/>
    <property type="project" value="GO_Central"/>
</dbReference>
<dbReference type="GO" id="GO:0043419">
    <property type="term" value="P:urea catabolic process"/>
    <property type="evidence" value="ECO:0000318"/>
    <property type="project" value="GO_Central"/>
</dbReference>
<dbReference type="CDD" id="cd00375">
    <property type="entry name" value="Urease_alpha"/>
    <property type="match status" value="1"/>
</dbReference>
<dbReference type="CDD" id="cd00407">
    <property type="entry name" value="Urease_beta"/>
    <property type="match status" value="1"/>
</dbReference>
<dbReference type="CDD" id="cd00390">
    <property type="entry name" value="Urease_gamma"/>
    <property type="match status" value="1"/>
</dbReference>
<dbReference type="FunFam" id="2.10.150.10:FF:000002">
    <property type="entry name" value="Urease"/>
    <property type="match status" value="1"/>
</dbReference>
<dbReference type="FunFam" id="3.20.20.140:FF:000024">
    <property type="entry name" value="Urease"/>
    <property type="match status" value="1"/>
</dbReference>
<dbReference type="FunFam" id="3.30.280.10:FF:000001">
    <property type="entry name" value="Urease subunit alpha"/>
    <property type="match status" value="1"/>
</dbReference>
<dbReference type="Gene3D" id="3.20.20.140">
    <property type="entry name" value="Metal-dependent hydrolases"/>
    <property type="match status" value="1"/>
</dbReference>
<dbReference type="Gene3D" id="2.10.150.10">
    <property type="entry name" value="Urease, beta subunit"/>
    <property type="match status" value="1"/>
</dbReference>
<dbReference type="Gene3D" id="3.30.280.10">
    <property type="entry name" value="Urease, gamma-like subunit"/>
    <property type="match status" value="1"/>
</dbReference>
<dbReference type="Gene3D" id="2.30.40.10">
    <property type="entry name" value="Urease, subunit C, domain 1"/>
    <property type="match status" value="1"/>
</dbReference>
<dbReference type="HAMAP" id="MF_01953">
    <property type="entry name" value="Urease_alpha"/>
    <property type="match status" value="1"/>
</dbReference>
<dbReference type="HAMAP" id="MF_01954">
    <property type="entry name" value="Urease_beta"/>
    <property type="match status" value="1"/>
</dbReference>
<dbReference type="InterPro" id="IPR006680">
    <property type="entry name" value="Amidohydro-rel"/>
</dbReference>
<dbReference type="InterPro" id="IPR011059">
    <property type="entry name" value="Metal-dep_hydrolase_composite"/>
</dbReference>
<dbReference type="InterPro" id="IPR032466">
    <property type="entry name" value="Metal_Hydrolase"/>
</dbReference>
<dbReference type="InterPro" id="IPR008221">
    <property type="entry name" value="Urease"/>
</dbReference>
<dbReference type="InterPro" id="IPR011612">
    <property type="entry name" value="Urease_alpha_N_dom"/>
</dbReference>
<dbReference type="InterPro" id="IPR017950">
    <property type="entry name" value="Urease_AS"/>
</dbReference>
<dbReference type="InterPro" id="IPR005848">
    <property type="entry name" value="Urease_asu"/>
</dbReference>
<dbReference type="InterPro" id="IPR017951">
    <property type="entry name" value="Urease_asu_c"/>
</dbReference>
<dbReference type="InterPro" id="IPR002019">
    <property type="entry name" value="Urease_beta-like"/>
</dbReference>
<dbReference type="InterPro" id="IPR036461">
    <property type="entry name" value="Urease_betasu_sf"/>
</dbReference>
<dbReference type="InterPro" id="IPR002026">
    <property type="entry name" value="Urease_gamma/gamma-beta_su"/>
</dbReference>
<dbReference type="InterPro" id="IPR036463">
    <property type="entry name" value="Urease_gamma_sf"/>
</dbReference>
<dbReference type="InterPro" id="IPR029754">
    <property type="entry name" value="Urease_Ni-bd"/>
</dbReference>
<dbReference type="InterPro" id="IPR050069">
    <property type="entry name" value="Urease_subunit"/>
</dbReference>
<dbReference type="NCBIfam" id="NF009671">
    <property type="entry name" value="PRK13192.1"/>
    <property type="match status" value="1"/>
</dbReference>
<dbReference type="NCBIfam" id="NF009686">
    <property type="entry name" value="PRK13207.1"/>
    <property type="match status" value="1"/>
</dbReference>
<dbReference type="NCBIfam" id="TIGR01792">
    <property type="entry name" value="urease_alph"/>
    <property type="match status" value="1"/>
</dbReference>
<dbReference type="NCBIfam" id="TIGR00192">
    <property type="entry name" value="urease_beta"/>
    <property type="match status" value="1"/>
</dbReference>
<dbReference type="NCBIfam" id="TIGR00193">
    <property type="entry name" value="urease_gam"/>
    <property type="match status" value="1"/>
</dbReference>
<dbReference type="PANTHER" id="PTHR33569">
    <property type="entry name" value="UREASE"/>
    <property type="match status" value="1"/>
</dbReference>
<dbReference type="PANTHER" id="PTHR33569:SF1">
    <property type="entry name" value="UREASE"/>
    <property type="match status" value="1"/>
</dbReference>
<dbReference type="Pfam" id="PF01979">
    <property type="entry name" value="Amidohydro_1"/>
    <property type="match status" value="1"/>
</dbReference>
<dbReference type="Pfam" id="PF00449">
    <property type="entry name" value="Urease_alpha"/>
    <property type="match status" value="1"/>
</dbReference>
<dbReference type="Pfam" id="PF00699">
    <property type="entry name" value="Urease_beta"/>
    <property type="match status" value="1"/>
</dbReference>
<dbReference type="Pfam" id="PF00547">
    <property type="entry name" value="Urease_gamma"/>
    <property type="match status" value="1"/>
</dbReference>
<dbReference type="PIRSF" id="PIRSF001222">
    <property type="entry name" value="Urease"/>
    <property type="match status" value="1"/>
</dbReference>
<dbReference type="PRINTS" id="PR01752">
    <property type="entry name" value="UREASE"/>
</dbReference>
<dbReference type="SUPFAM" id="SSF51338">
    <property type="entry name" value="Composite domain of metallo-dependent hydrolases"/>
    <property type="match status" value="1"/>
</dbReference>
<dbReference type="SUPFAM" id="SSF51556">
    <property type="entry name" value="Metallo-dependent hydrolases"/>
    <property type="match status" value="1"/>
</dbReference>
<dbReference type="SUPFAM" id="SSF51278">
    <property type="entry name" value="Urease, beta-subunit"/>
    <property type="match status" value="1"/>
</dbReference>
<dbReference type="SUPFAM" id="SSF54111">
    <property type="entry name" value="Urease, gamma-subunit"/>
    <property type="match status" value="1"/>
</dbReference>
<dbReference type="PROSITE" id="PS01120">
    <property type="entry name" value="UREASE_1"/>
    <property type="match status" value="1"/>
</dbReference>
<dbReference type="PROSITE" id="PS00145">
    <property type="entry name" value="UREASE_2"/>
    <property type="match status" value="1"/>
</dbReference>
<dbReference type="PROSITE" id="PS51368">
    <property type="entry name" value="UREASE_3"/>
    <property type="match status" value="1"/>
</dbReference>
<organism>
    <name type="scientific">Aspergillus fumigatus (strain ATCC MYA-4609 / CBS 101355 / FGSC A1100 / Af293)</name>
    <name type="common">Neosartorya fumigata</name>
    <dbReference type="NCBI Taxonomy" id="330879"/>
    <lineage>
        <taxon>Eukaryota</taxon>
        <taxon>Fungi</taxon>
        <taxon>Dikarya</taxon>
        <taxon>Ascomycota</taxon>
        <taxon>Pezizomycotina</taxon>
        <taxon>Eurotiomycetes</taxon>
        <taxon>Eurotiomycetidae</taxon>
        <taxon>Eurotiales</taxon>
        <taxon>Aspergillaceae</taxon>
        <taxon>Aspergillus</taxon>
        <taxon>Aspergillus subgen. Fumigati</taxon>
    </lineage>
</organism>
<protein>
    <recommendedName>
        <fullName>Urease</fullName>
        <ecNumber>3.5.1.5</ecNumber>
    </recommendedName>
    <alternativeName>
        <fullName>Urea amidohydrolase</fullName>
    </alternativeName>
</protein>
<feature type="chain" id="PRO_0000067526" description="Urease">
    <location>
        <begin position="1"/>
        <end position="838"/>
    </location>
</feature>
<feature type="domain" description="Urease">
    <location>
        <begin position="402"/>
        <end position="838"/>
    </location>
</feature>
<feature type="active site" description="Proton donor" evidence="1">
    <location>
        <position position="593"/>
    </location>
</feature>
<feature type="binding site" evidence="1">
    <location>
        <position position="407"/>
    </location>
    <ligand>
        <name>Ni(2+)</name>
        <dbReference type="ChEBI" id="CHEBI:49786"/>
        <label>1</label>
    </ligand>
</feature>
<feature type="binding site" evidence="1">
    <location>
        <position position="409"/>
    </location>
    <ligand>
        <name>Ni(2+)</name>
        <dbReference type="ChEBI" id="CHEBI:49786"/>
        <label>1</label>
    </ligand>
</feature>
<feature type="binding site" description="via carbamate group" evidence="1">
    <location>
        <position position="490"/>
    </location>
    <ligand>
        <name>Ni(2+)</name>
        <dbReference type="ChEBI" id="CHEBI:49786"/>
        <label>1</label>
    </ligand>
</feature>
<feature type="binding site" description="via carbamate group" evidence="1">
    <location>
        <position position="490"/>
    </location>
    <ligand>
        <name>Ni(2+)</name>
        <dbReference type="ChEBI" id="CHEBI:49786"/>
        <label>2</label>
    </ligand>
</feature>
<feature type="binding site" evidence="1">
    <location>
        <position position="492"/>
    </location>
    <ligand>
        <name>substrate</name>
    </ligand>
</feature>
<feature type="binding site" evidence="1">
    <location>
        <position position="519"/>
    </location>
    <ligand>
        <name>Ni(2+)</name>
        <dbReference type="ChEBI" id="CHEBI:49786"/>
        <label>2</label>
    </ligand>
</feature>
<feature type="binding site" evidence="1">
    <location>
        <position position="545"/>
    </location>
    <ligand>
        <name>Ni(2+)</name>
        <dbReference type="ChEBI" id="CHEBI:49786"/>
        <label>2</label>
    </ligand>
</feature>
<feature type="binding site" evidence="1">
    <location>
        <position position="633"/>
    </location>
    <ligand>
        <name>Ni(2+)</name>
        <dbReference type="ChEBI" id="CHEBI:49786"/>
        <label>1</label>
    </ligand>
</feature>
<feature type="modified residue" description="N6-carboxylysine" evidence="1">
    <location>
        <position position="490"/>
    </location>
</feature>
<feature type="sequence conflict" description="In Ref. 1; CAE17672." evidence="2" ref="1">
    <original>R</original>
    <variation>P</variation>
    <location>
        <position position="159"/>
    </location>
</feature>
<keyword id="KW-0378">Hydrolase</keyword>
<keyword id="KW-0479">Metal-binding</keyword>
<keyword id="KW-0533">Nickel</keyword>
<keyword id="KW-1185">Reference proteome</keyword>
<gene>
    <name type="primary">ure1</name>
    <name type="ORF">AFUA_1G04560</name>
</gene>
<evidence type="ECO:0000250" key="1"/>
<evidence type="ECO:0000305" key="2"/>
<accession>Q6A3P9</accession>
<accession>Q4WJW6</accession>
<comment type="catalytic activity">
    <reaction>
        <text>urea + 2 H2O + H(+) = hydrogencarbonate + 2 NH4(+)</text>
        <dbReference type="Rhea" id="RHEA:20557"/>
        <dbReference type="ChEBI" id="CHEBI:15377"/>
        <dbReference type="ChEBI" id="CHEBI:15378"/>
        <dbReference type="ChEBI" id="CHEBI:16199"/>
        <dbReference type="ChEBI" id="CHEBI:17544"/>
        <dbReference type="ChEBI" id="CHEBI:28938"/>
        <dbReference type="EC" id="3.5.1.5"/>
    </reaction>
</comment>
<comment type="cofactor">
    <cofactor evidence="1">
        <name>Ni cation</name>
        <dbReference type="ChEBI" id="CHEBI:25516"/>
    </cofactor>
    <text evidence="1">Binds 2 nickel ions per subunit.</text>
</comment>
<comment type="pathway">
    <text>Nitrogen metabolism; urea degradation; CO(2) and NH(3) from urea (urease route): step 1/1.</text>
</comment>
<comment type="subunit">
    <text evidence="1">Homohexamer.</text>
</comment>
<comment type="PTM">
    <text evidence="1">Carboxylation allows a single lysine to coordinate two nickel ions.</text>
</comment>
<comment type="similarity">
    <text evidence="2">In the C-terminal section; belongs to the metallo-dependent hydrolases superfamily. Urease alpha subunit family.</text>
</comment>
<comment type="sequence caution" evidence="2">
    <conflict type="erroneous gene model prediction">
        <sequence resource="EMBL-CDS" id="EAL88166"/>
    </conflict>
</comment>
<name>UREA_ASPFU</name>
<proteinExistence type="evidence at transcript level"/>
<sequence length="838" mass="90912">MHLIPKELDKLVISQLGFLAQRRLARGVRLNHAEAAALISSNLQELIRDGHYSVADLMSIGKTMLGRRHVLPSVVHTLVELQVEGTFPTGTYLVTVHHPISSDDGDLEKALYGSFLPIPPADTFPDPNPDDYLPEKMPGAVLPVKNERITLNDGRKRIRLKVMSKGDRPIQVGSHYHFIETNPQLHFDRLRAYGYRLDIPAGTSVRFEPGDTKTVTLVEIAGNRIIKGGNSIASGKVDISRAEEILQRLQVEGFAHVPEPAPTADSALIAPFTMDREAYARMFGPTTGDLVRLGLTNLWVRVEKDCTVYGDECAFGGGKTLREGMGQSSERSATECLDTVITNALIIDWSGIYKADIGIKNGLISAIGKAGNPDMMDGVHPDMIVGSSTDVIAGENKIVTAGGFDTHIHFICPQQVDEALASGITTFLGGGTGPSTGTNATTCTPGPTLMRQMIQACDGLPINVGITGKGNDSGGKSIEEQIRAGAAGLKLHEDWGSTPAAIDTCLDMCDKFDVQCMIHTDTLNESGFVEQTVKSFKNRTIHTYHTEGAGGGHAPDIISVVEHPNVLPSSTNPTRPFTMNTLDEHLDMLMVCHHLSKNIPEDVAFAESRIRAETIAAEDVLHDLGAISMMSSDSQAMGRCGEVILRTWNTAHKNKAQRGPLKEDEGTGADNFRVKRYISKYTINPAIAQGMSHLIGSVEVGKLADLVIWHPSTFGTKPAQVLKSGMIVASQMGDPNGSIPTIEPVVMRRQFGAFVPSTSIMWVSQASIDDGIVQSYGLKKRIEAVRNCRNIGKKDMKFNDVMPKMRVDPESYVVEADGVLCDAEPAEALPLTQDYFVY</sequence>
<reference key="1">
    <citation type="submission" date="2003-07" db="EMBL/GenBank/DDBJ databases">
        <title>Molecular cloning and sequencing of urease from Aspergillus fumigatus.</title>
        <authorList>
            <person name="Eglins M."/>
            <person name="Reichard U."/>
        </authorList>
    </citation>
    <scope>NUCLEOTIDE SEQUENCE [GENOMIC DNA]</scope>
    <source>
        <strain>D141</strain>
    </source>
</reference>
<reference key="2">
    <citation type="journal article" date="2005" name="Nature">
        <title>Genomic sequence of the pathogenic and allergenic filamentous fungus Aspergillus fumigatus.</title>
        <authorList>
            <person name="Nierman W.C."/>
            <person name="Pain A."/>
            <person name="Anderson M.J."/>
            <person name="Wortman J.R."/>
            <person name="Kim H.S."/>
            <person name="Arroyo J."/>
            <person name="Berriman M."/>
            <person name="Abe K."/>
            <person name="Archer D.B."/>
            <person name="Bermejo C."/>
            <person name="Bennett J.W."/>
            <person name="Bowyer P."/>
            <person name="Chen D."/>
            <person name="Collins M."/>
            <person name="Coulsen R."/>
            <person name="Davies R."/>
            <person name="Dyer P.S."/>
            <person name="Farman M.L."/>
            <person name="Fedorova N."/>
            <person name="Fedorova N.D."/>
            <person name="Feldblyum T.V."/>
            <person name="Fischer R."/>
            <person name="Fosker N."/>
            <person name="Fraser A."/>
            <person name="Garcia J.L."/>
            <person name="Garcia M.J."/>
            <person name="Goble A."/>
            <person name="Goldman G.H."/>
            <person name="Gomi K."/>
            <person name="Griffith-Jones S."/>
            <person name="Gwilliam R."/>
            <person name="Haas B.J."/>
            <person name="Haas H."/>
            <person name="Harris D.E."/>
            <person name="Horiuchi H."/>
            <person name="Huang J."/>
            <person name="Humphray S."/>
            <person name="Jimenez J."/>
            <person name="Keller N."/>
            <person name="Khouri H."/>
            <person name="Kitamoto K."/>
            <person name="Kobayashi T."/>
            <person name="Konzack S."/>
            <person name="Kulkarni R."/>
            <person name="Kumagai T."/>
            <person name="Lafton A."/>
            <person name="Latge J.-P."/>
            <person name="Li W."/>
            <person name="Lord A."/>
            <person name="Lu C."/>
            <person name="Majoros W.H."/>
            <person name="May G.S."/>
            <person name="Miller B.L."/>
            <person name="Mohamoud Y."/>
            <person name="Molina M."/>
            <person name="Monod M."/>
            <person name="Mouyna I."/>
            <person name="Mulligan S."/>
            <person name="Murphy L.D."/>
            <person name="O'Neil S."/>
            <person name="Paulsen I."/>
            <person name="Penalva M.A."/>
            <person name="Pertea M."/>
            <person name="Price C."/>
            <person name="Pritchard B.L."/>
            <person name="Quail M.A."/>
            <person name="Rabbinowitsch E."/>
            <person name="Rawlins N."/>
            <person name="Rajandream M.A."/>
            <person name="Reichard U."/>
            <person name="Renauld H."/>
            <person name="Robson G.D."/>
            <person name="Rodriguez de Cordoba S."/>
            <person name="Rodriguez-Pena J.M."/>
            <person name="Ronning C.M."/>
            <person name="Rutter S."/>
            <person name="Salzberg S.L."/>
            <person name="Sanchez M."/>
            <person name="Sanchez-Ferrero J.C."/>
            <person name="Saunders D."/>
            <person name="Seeger K."/>
            <person name="Squares R."/>
            <person name="Squares S."/>
            <person name="Takeuchi M."/>
            <person name="Tekaia F."/>
            <person name="Turner G."/>
            <person name="Vazquez de Aldana C.R."/>
            <person name="Weidman J."/>
            <person name="White O."/>
            <person name="Woodward J.R."/>
            <person name="Yu J.-H."/>
            <person name="Fraser C.M."/>
            <person name="Galagan J.E."/>
            <person name="Asai K."/>
            <person name="Machida M."/>
            <person name="Hall N."/>
            <person name="Barrell B.G."/>
            <person name="Denning D.W."/>
        </authorList>
    </citation>
    <scope>NUCLEOTIDE SEQUENCE [LARGE SCALE GENOMIC DNA]</scope>
    <source>
        <strain>ATCC MYA-4609 / CBS 101355 / FGSC A1100 / Af293</strain>
    </source>
</reference>